<evidence type="ECO:0000250" key="1">
    <source>
        <dbReference type="UniProtKB" id="P05017"/>
    </source>
</evidence>
<evidence type="ECO:0000250" key="2">
    <source>
        <dbReference type="UniProtKB" id="P05019"/>
    </source>
</evidence>
<evidence type="ECO:0000250" key="3">
    <source>
        <dbReference type="UniProtKB" id="P08025"/>
    </source>
</evidence>
<evidence type="ECO:0000256" key="4">
    <source>
        <dbReference type="SAM" id="MobiDB-lite"/>
    </source>
</evidence>
<evidence type="ECO:0000303" key="5">
    <source>
    </source>
</evidence>
<evidence type="ECO:0000305" key="6"/>
<accession>P16545</accession>
<dbReference type="EMBL" id="X17492">
    <property type="protein sequence ID" value="CAA35527.1"/>
    <property type="molecule type" value="mRNA"/>
</dbReference>
<dbReference type="EMBL" id="X52388">
    <property type="protein sequence ID" value="CAA36617.1"/>
    <property type="molecule type" value="Genomic_DNA"/>
</dbReference>
<dbReference type="EMBL" id="X52077">
    <property type="protein sequence ID" value="CAA36296.1"/>
    <property type="molecule type" value="Genomic_DNA"/>
</dbReference>
<dbReference type="EMBL" id="M31175">
    <property type="protein sequence ID" value="AAA31043.1"/>
    <property type="status" value="ALT_INIT"/>
    <property type="molecule type" value="mRNA"/>
</dbReference>
<dbReference type="EMBL" id="X17638">
    <property type="protein sequence ID" value="CAA35632.1"/>
    <property type="molecule type" value="Genomic_DNA"/>
</dbReference>
<dbReference type="PIR" id="S12825">
    <property type="entry name" value="S12825"/>
</dbReference>
<dbReference type="RefSeq" id="NP_999421.1">
    <property type="nucleotide sequence ID" value="NM_214256.1"/>
</dbReference>
<dbReference type="RefSeq" id="XP_005664255.1">
    <property type="nucleotide sequence ID" value="XM_005664198.3"/>
</dbReference>
<dbReference type="BMRB" id="P16545"/>
<dbReference type="SMR" id="P16545"/>
<dbReference type="FunCoup" id="P16545">
    <property type="interactions" value="558"/>
</dbReference>
<dbReference type="STRING" id="9823.ENSSSCP00000000915"/>
<dbReference type="PaxDb" id="9823-ENSSSCP00000000915"/>
<dbReference type="Ensembl" id="ENSSSCT00000000936.5">
    <property type="protein sequence ID" value="ENSSSCP00000000916.4"/>
    <property type="gene ID" value="ENSSSCG00000000857.6"/>
</dbReference>
<dbReference type="Ensembl" id="ENSSSCT00025089768.1">
    <property type="protein sequence ID" value="ENSSSCP00025039297.1"/>
    <property type="gene ID" value="ENSSSCG00025065189.1"/>
</dbReference>
<dbReference type="Ensembl" id="ENSSSCT00030045163.1">
    <property type="protein sequence ID" value="ENSSSCP00030020295.1"/>
    <property type="gene ID" value="ENSSSCG00030032527.1"/>
</dbReference>
<dbReference type="Ensembl" id="ENSSSCT00040062548.1">
    <property type="protein sequence ID" value="ENSSSCP00040026368.1"/>
    <property type="gene ID" value="ENSSSCG00040046075.1"/>
</dbReference>
<dbReference type="Ensembl" id="ENSSSCT00045028772.1">
    <property type="protein sequence ID" value="ENSSSCP00045019910.1"/>
    <property type="gene ID" value="ENSSSCG00045016771.1"/>
</dbReference>
<dbReference type="Ensembl" id="ENSSSCT00050064695.1">
    <property type="protein sequence ID" value="ENSSSCP00050027866.1"/>
    <property type="gene ID" value="ENSSSCG00050047469.1"/>
</dbReference>
<dbReference type="Ensembl" id="ENSSSCT00055013171.1">
    <property type="protein sequence ID" value="ENSSSCP00055010343.1"/>
    <property type="gene ID" value="ENSSSCG00055006711.1"/>
</dbReference>
<dbReference type="Ensembl" id="ENSSSCT00060049528.1">
    <property type="protein sequence ID" value="ENSSSCP00060021193.1"/>
    <property type="gene ID" value="ENSSSCG00060036476.1"/>
</dbReference>
<dbReference type="Ensembl" id="ENSSSCT00070012408.1">
    <property type="protein sequence ID" value="ENSSSCP00070010205.1"/>
    <property type="gene ID" value="ENSSSCG00070006457.1"/>
</dbReference>
<dbReference type="Ensembl" id="ENSSSCT00115011955">
    <property type="protein sequence ID" value="ENSSSCP00115011285"/>
    <property type="gene ID" value="ENSSSCG00115006796"/>
</dbReference>
<dbReference type="GeneID" id="397491"/>
<dbReference type="KEGG" id="ssc:397491"/>
<dbReference type="CTD" id="3479"/>
<dbReference type="VGNC" id="VGNC:98044">
    <property type="gene designation" value="IGF1"/>
</dbReference>
<dbReference type="eggNOG" id="ENOG502RCAB">
    <property type="taxonomic scope" value="Eukaryota"/>
</dbReference>
<dbReference type="GeneTree" id="ENSGT00940000159081"/>
<dbReference type="HOGENOM" id="CLU_123939_0_0_1"/>
<dbReference type="InParanoid" id="P16545"/>
<dbReference type="OrthoDB" id="8936076at2759"/>
<dbReference type="Reactome" id="R-SSC-114608">
    <property type="pathway name" value="Platelet degranulation"/>
</dbReference>
<dbReference type="Reactome" id="R-SSC-2404192">
    <property type="pathway name" value="Signaling by Type 1 Insulin-like Growth Factor 1 Receptor (IGF1R)"/>
</dbReference>
<dbReference type="Reactome" id="R-SSC-2428928">
    <property type="pathway name" value="IRS-related events triggered by IGF1R"/>
</dbReference>
<dbReference type="Reactome" id="R-SSC-2428933">
    <property type="pathway name" value="SHC-related events triggered by IGF1R"/>
</dbReference>
<dbReference type="Reactome" id="R-SSC-381426">
    <property type="pathway name" value="Regulation of Insulin-like Growth Factor (IGF) transport and uptake by Insulin-like Growth Factor Binding Proteins (IGFBPs)"/>
</dbReference>
<dbReference type="Reactome" id="R-SSC-422085">
    <property type="pathway name" value="Synthesis, secretion, and deacylation of Ghrelin"/>
</dbReference>
<dbReference type="Proteomes" id="UP000008227">
    <property type="component" value="Chromosome 5"/>
</dbReference>
<dbReference type="Proteomes" id="UP000314985">
    <property type="component" value="Chromosome 5"/>
</dbReference>
<dbReference type="Proteomes" id="UP000694570">
    <property type="component" value="Unplaced"/>
</dbReference>
<dbReference type="Proteomes" id="UP000694571">
    <property type="component" value="Unplaced"/>
</dbReference>
<dbReference type="Proteomes" id="UP000694720">
    <property type="component" value="Unplaced"/>
</dbReference>
<dbReference type="Proteomes" id="UP000694722">
    <property type="component" value="Unplaced"/>
</dbReference>
<dbReference type="Proteomes" id="UP000694723">
    <property type="component" value="Unplaced"/>
</dbReference>
<dbReference type="Proteomes" id="UP000694724">
    <property type="component" value="Unplaced"/>
</dbReference>
<dbReference type="Proteomes" id="UP000694725">
    <property type="component" value="Unplaced"/>
</dbReference>
<dbReference type="Proteomes" id="UP000694726">
    <property type="component" value="Unplaced"/>
</dbReference>
<dbReference type="Proteomes" id="UP000694727">
    <property type="component" value="Unplaced"/>
</dbReference>
<dbReference type="Proteomes" id="UP000694728">
    <property type="component" value="Unplaced"/>
</dbReference>
<dbReference type="GO" id="GO:0035867">
    <property type="term" value="C:alphav-beta3 integrin-IGF-1-IGF1R complex"/>
    <property type="evidence" value="ECO:0000250"/>
    <property type="project" value="UniProtKB"/>
</dbReference>
<dbReference type="GO" id="GO:0070382">
    <property type="term" value="C:exocytic vesicle"/>
    <property type="evidence" value="ECO:0000250"/>
    <property type="project" value="UniProtKB"/>
</dbReference>
<dbReference type="GO" id="GO:0005615">
    <property type="term" value="C:extracellular space"/>
    <property type="evidence" value="ECO:0007669"/>
    <property type="project" value="InterPro"/>
</dbReference>
<dbReference type="GO" id="GO:0005886">
    <property type="term" value="C:plasma membrane"/>
    <property type="evidence" value="ECO:0000314"/>
    <property type="project" value="AgBase"/>
</dbReference>
<dbReference type="GO" id="GO:0008083">
    <property type="term" value="F:growth factor activity"/>
    <property type="evidence" value="ECO:0007669"/>
    <property type="project" value="UniProtKB-KW"/>
</dbReference>
<dbReference type="GO" id="GO:0005179">
    <property type="term" value="F:hormone activity"/>
    <property type="evidence" value="ECO:0007669"/>
    <property type="project" value="InterPro"/>
</dbReference>
<dbReference type="GO" id="GO:0005159">
    <property type="term" value="F:insulin-like growth factor receptor binding"/>
    <property type="evidence" value="ECO:0000250"/>
    <property type="project" value="UniProtKB"/>
</dbReference>
<dbReference type="GO" id="GO:0048009">
    <property type="term" value="P:insulin-like growth factor receptor signaling pathway"/>
    <property type="evidence" value="ECO:0000250"/>
    <property type="project" value="UniProtKB"/>
</dbReference>
<dbReference type="GO" id="GO:0043066">
    <property type="term" value="P:negative regulation of apoptotic process"/>
    <property type="evidence" value="ECO:0000250"/>
    <property type="project" value="UniProtKB"/>
</dbReference>
<dbReference type="GO" id="GO:0090201">
    <property type="term" value="P:negative regulation of release of cytochrome c from mitochondria"/>
    <property type="evidence" value="ECO:0000250"/>
    <property type="project" value="UniProtKB"/>
</dbReference>
<dbReference type="GO" id="GO:0034392">
    <property type="term" value="P:negative regulation of smooth muscle cell apoptotic process"/>
    <property type="evidence" value="ECO:0000250"/>
    <property type="project" value="UniProtKB"/>
</dbReference>
<dbReference type="GO" id="GO:0008284">
    <property type="term" value="P:positive regulation of cell population proliferation"/>
    <property type="evidence" value="ECO:0000314"/>
    <property type="project" value="BHF-UCL"/>
</dbReference>
<dbReference type="GO" id="GO:0046326">
    <property type="term" value="P:positive regulation of D-glucose import"/>
    <property type="evidence" value="ECO:0000250"/>
    <property type="project" value="UniProtKB"/>
</dbReference>
<dbReference type="GO" id="GO:0045725">
    <property type="term" value="P:positive regulation of glycogen biosynthetic process"/>
    <property type="evidence" value="ECO:0000250"/>
    <property type="project" value="UniProtKB"/>
</dbReference>
<dbReference type="GO" id="GO:0043410">
    <property type="term" value="P:positive regulation of MAPK cascade"/>
    <property type="evidence" value="ECO:0000250"/>
    <property type="project" value="UniProtKB"/>
</dbReference>
<dbReference type="CDD" id="cd04368">
    <property type="entry name" value="IlGF"/>
    <property type="match status" value="1"/>
</dbReference>
<dbReference type="FunFam" id="1.10.100.10:FF:000001">
    <property type="entry name" value="insulin-like growth factor I isoform X1"/>
    <property type="match status" value="1"/>
</dbReference>
<dbReference type="Gene3D" id="1.10.100.10">
    <property type="entry name" value="Insulin-like"/>
    <property type="match status" value="1"/>
</dbReference>
<dbReference type="InterPro" id="IPR022341">
    <property type="entry name" value="IGF-I"/>
</dbReference>
<dbReference type="InterPro" id="IPR016179">
    <property type="entry name" value="Insulin-like"/>
</dbReference>
<dbReference type="InterPro" id="IPR022350">
    <property type="entry name" value="Insulin-like_growth_factor"/>
</dbReference>
<dbReference type="InterPro" id="IPR036438">
    <property type="entry name" value="Insulin-like_sf"/>
</dbReference>
<dbReference type="InterPro" id="IPR022353">
    <property type="entry name" value="Insulin_CS"/>
</dbReference>
<dbReference type="InterPro" id="IPR022352">
    <property type="entry name" value="Insulin_family"/>
</dbReference>
<dbReference type="PANTHER" id="PTHR46845">
    <property type="entry name" value="INSULIN-LIKE GROWTH FACTOR I"/>
    <property type="match status" value="1"/>
</dbReference>
<dbReference type="PANTHER" id="PTHR46845:SF1">
    <property type="entry name" value="INSULIN-LIKE GROWTH FACTOR I"/>
    <property type="match status" value="1"/>
</dbReference>
<dbReference type="Pfam" id="PF00049">
    <property type="entry name" value="Insulin"/>
    <property type="match status" value="1"/>
</dbReference>
<dbReference type="PRINTS" id="PR02002">
    <property type="entry name" value="INSLNLIKEGF"/>
</dbReference>
<dbReference type="PRINTS" id="PR02005">
    <property type="entry name" value="INSLNLIKEGF1"/>
</dbReference>
<dbReference type="PRINTS" id="PR00276">
    <property type="entry name" value="INSULINFAMLY"/>
</dbReference>
<dbReference type="SMART" id="SM00078">
    <property type="entry name" value="IlGF"/>
    <property type="match status" value="1"/>
</dbReference>
<dbReference type="SUPFAM" id="SSF56994">
    <property type="entry name" value="Insulin-like"/>
    <property type="match status" value="1"/>
</dbReference>
<dbReference type="PROSITE" id="PS00262">
    <property type="entry name" value="INSULIN"/>
    <property type="match status" value="1"/>
</dbReference>
<organism>
    <name type="scientific">Sus scrofa</name>
    <name type="common">Pig</name>
    <dbReference type="NCBI Taxonomy" id="9823"/>
    <lineage>
        <taxon>Eukaryota</taxon>
        <taxon>Metazoa</taxon>
        <taxon>Chordata</taxon>
        <taxon>Craniata</taxon>
        <taxon>Vertebrata</taxon>
        <taxon>Euteleostomi</taxon>
        <taxon>Mammalia</taxon>
        <taxon>Eutheria</taxon>
        <taxon>Laurasiatheria</taxon>
        <taxon>Artiodactyla</taxon>
        <taxon>Suina</taxon>
        <taxon>Suidae</taxon>
        <taxon>Sus</taxon>
    </lineage>
</organism>
<gene>
    <name evidence="2" type="primary">IGF1</name>
    <name evidence="2" type="synonym">IGF-1</name>
</gene>
<sequence>MGKISSLPTQLFKCCFCDFLKVKMHITSSSHLFYLALCLLSFTSSATAGPETLCGAELVDALQFVCGDRGFYFNKPTGYGSSSRRAPQTGIVDECCFRSCDLRRLEMYCAPLKPAKSARSVRAQRHTDMPKAQKEVHLKNTSRGSSGNKNYRM</sequence>
<feature type="signal peptide">
    <location>
        <begin position="1"/>
        <end status="unknown"/>
    </location>
</feature>
<feature type="propeptide" id="PRO_0000015672">
    <location>
        <begin status="unknown"/>
        <end position="48"/>
    </location>
</feature>
<feature type="chain" id="PRO_0000015673" description="Insulin-like growth factor 1">
    <location>
        <begin position="49"/>
        <end position="118"/>
    </location>
</feature>
<feature type="propeptide" id="PRO_0000015674" description="E peptide">
    <location>
        <begin position="119"/>
        <end position="153"/>
    </location>
</feature>
<feature type="region of interest" description="B">
    <location>
        <begin position="49"/>
        <end position="77"/>
    </location>
</feature>
<feature type="region of interest" description="C">
    <location>
        <begin position="78"/>
        <end position="89"/>
    </location>
</feature>
<feature type="region of interest" description="A">
    <location>
        <begin position="90"/>
        <end position="110"/>
    </location>
</feature>
<feature type="region of interest" description="D">
    <location>
        <begin position="111"/>
        <end position="118"/>
    </location>
</feature>
<feature type="region of interest" description="Disordered" evidence="4">
    <location>
        <begin position="120"/>
        <end position="153"/>
    </location>
</feature>
<feature type="compositionally biased region" description="Basic and acidic residues" evidence="4">
    <location>
        <begin position="125"/>
        <end position="138"/>
    </location>
</feature>
<feature type="compositionally biased region" description="Polar residues" evidence="4">
    <location>
        <begin position="139"/>
        <end position="153"/>
    </location>
</feature>
<feature type="disulfide bond" evidence="2">
    <location>
        <begin position="54"/>
        <end position="96"/>
    </location>
</feature>
<feature type="disulfide bond" evidence="2">
    <location>
        <begin position="66"/>
        <end position="109"/>
    </location>
</feature>
<feature type="disulfide bond" evidence="2">
    <location>
        <begin position="95"/>
        <end position="100"/>
    </location>
</feature>
<feature type="sequence conflict" description="In Ref. 2; AAA31043." evidence="6" ref="2">
    <original>L</original>
    <variation>Y</variation>
    <location>
        <position position="20"/>
    </location>
</feature>
<comment type="function">
    <text evidence="1 2 3">The insulin-like growth factors, isolated from plasma, are structurally and functionally related to insulin but have a much higher growth-promoting activity. May be a physiological regulator of [1-14C]-2-deoxy-D-glucose (2DG) transport and glycogen synthesis in osteoblasts. Stimulates glucose transport in bone-derived osteoblastic (PyMS) cells and is effective at much lower concentrations than insulin, not only regarding glycogen and DNA synthesis but also with regard to enhancing glucose uptake. May play a role in synapse maturation. Ca(2+)-dependent exocytosis of IGF1 is required for sensory perception of smell in the olfactory bulb. Acts as a ligand for IGF1R. Binds to the alpha subunit of IGF1R, leading to the activation of the intrinsic tyrosine kinase activity which autophosphorylates tyrosine residues in the beta subunit thus initiating a cascade of down-stream signaling events leading to activation of the PI3K-AKT/PKB and the Ras-MAPK pathways. Binds to integrins ITGAV:ITGB3 and ITGA6:ITGB4. Its binding to integrins and subsequent ternary complex formation with integrins and IGFR1 are essential for IGF1 signaling. Induces the phosphorylation and activation of IGFR1, MAPK3/ERK1, MAPK1/ERK2 and AKT1 (By similarity). As part of the MAPK/ERK signaling pathway, acts as a negative regulator of apoptosis in cardiomyocytes via promotion of STUB1/CHIP-mediated ubiquitination and degradation of ICER-type isoforms of CREM (By similarity).</text>
</comment>
<comment type="subunit">
    <text evidence="2">Forms a ternary complex with IGFR1 and ITGAV:ITGB3. Forms a ternary complex with IGFR1 and ITGA6:ITGB4. Forms a ternary complex with IGFBP3 and ALS.</text>
</comment>
<comment type="subcellular location">
    <subcellularLocation>
        <location evidence="1">Secreted</location>
    </subcellularLocation>
</comment>
<comment type="similarity">
    <text evidence="6">Belongs to the insulin family.</text>
</comment>
<comment type="sequence caution" evidence="6">
    <conflict type="erroneous initiation">
        <sequence resource="EMBL-CDS" id="AAA31043"/>
    </conflict>
    <text>Truncated N-terminus.</text>
</comment>
<proteinExistence type="evidence at transcript level"/>
<name>IGF1_PIG</name>
<protein>
    <recommendedName>
        <fullName evidence="2">Insulin-like growth factor 1</fullName>
    </recommendedName>
    <alternativeName>
        <fullName evidence="5">Insulin-like growth factor I</fullName>
        <shortName evidence="5">IGF-I</shortName>
    </alternativeName>
    <alternativeName>
        <fullName>Somatomedin</fullName>
    </alternativeName>
</protein>
<keyword id="KW-1015">Disulfide bond</keyword>
<keyword id="KW-0339">Growth factor</keyword>
<keyword id="KW-1185">Reference proteome</keyword>
<keyword id="KW-0964">Secreted</keyword>
<keyword id="KW-0732">Signal</keyword>
<reference key="1">
    <citation type="journal article" date="1990" name="Nucleic Acids Res.">
        <title>Nucleotide sequence of porcine insulin-like growth factor I: 5' untranslated region, exons 1 to 2 and mRNA.</title>
        <authorList>
            <person name="Mueller M."/>
            <person name="Brem G."/>
        </authorList>
    </citation>
    <scope>NUCLEOTIDE SEQUENCE [GENOMIC DNA / MRNA]</scope>
</reference>
<reference key="2">
    <citation type="journal article" date="1988" name="Mol. Endocrinol.">
        <title>Porcine insulin-like growth factor-I (pIGF-I): complementary deoxyribonucleic acid cloning and uterine expression of messenger ribonucleic acid encoding evolutionarily conserved IGF-I peptides.</title>
        <authorList>
            <person name="Tavakkol A."/>
            <person name="Simmen F.A."/>
            <person name="Simmen R.C.M."/>
        </authorList>
    </citation>
    <scope>NUCLEOTIDE SEQUENCE [MRNA] OF 20-153</scope>
</reference>
<reference key="3">
    <citation type="journal article" date="1993" name="J. Mol. Endocrinol.">
        <title>The porcine insulin-like growth factor-I gene: characterization and expression of alternate transcription sites.</title>
        <authorList>
            <person name="Weller P.A."/>
            <person name="Dickson M.C."/>
            <person name="Huskisson N.S."/>
            <person name="Dauncey M.J."/>
            <person name="Buttery P.J."/>
            <person name="Gilmour R.S."/>
        </authorList>
    </citation>
    <scope>NUCLEOTIDE SEQUENCE [GENOMIC DNA] OF 1-21</scope>
    <source>
        <strain>White Landrace</strain>
        <tissue>Liver</tissue>
    </source>
</reference>